<reference key="1">
    <citation type="journal article" date="2009" name="J. Bacteriol.">
        <title>Complete genome sequence and comparative genome analysis of enteropathogenic Escherichia coli O127:H6 strain E2348/69.</title>
        <authorList>
            <person name="Iguchi A."/>
            <person name="Thomson N.R."/>
            <person name="Ogura Y."/>
            <person name="Saunders D."/>
            <person name="Ooka T."/>
            <person name="Henderson I.R."/>
            <person name="Harris D."/>
            <person name="Asadulghani M."/>
            <person name="Kurokawa K."/>
            <person name="Dean P."/>
            <person name="Kenny B."/>
            <person name="Quail M.A."/>
            <person name="Thurston S."/>
            <person name="Dougan G."/>
            <person name="Hayashi T."/>
            <person name="Parkhill J."/>
            <person name="Frankel G."/>
        </authorList>
    </citation>
    <scope>NUCLEOTIDE SEQUENCE [LARGE SCALE GENOMIC DNA]</scope>
    <source>
        <strain>E2348/69 / EPEC</strain>
    </source>
</reference>
<evidence type="ECO:0000255" key="1">
    <source>
        <dbReference type="HAMAP-Rule" id="MF_00373"/>
    </source>
</evidence>
<evidence type="ECO:0000305" key="2"/>
<accession>B7ULJ2</accession>
<protein>
    <recommendedName>
        <fullName evidence="1">Large ribosomal subunit protein bL28</fullName>
    </recommendedName>
    <alternativeName>
        <fullName evidence="2">50S ribosomal protein L28</fullName>
    </alternativeName>
</protein>
<name>RL28_ECO27</name>
<keyword id="KW-1185">Reference proteome</keyword>
<keyword id="KW-0687">Ribonucleoprotein</keyword>
<keyword id="KW-0689">Ribosomal protein</keyword>
<gene>
    <name evidence="1" type="primary">rpmB</name>
    <name type="ordered locus">E2348C_3885</name>
</gene>
<proteinExistence type="inferred from homology"/>
<comment type="similarity">
    <text evidence="1">Belongs to the bacterial ribosomal protein bL28 family.</text>
</comment>
<feature type="chain" id="PRO_1000195922" description="Large ribosomal subunit protein bL28">
    <location>
        <begin position="1"/>
        <end position="78"/>
    </location>
</feature>
<dbReference type="EMBL" id="FM180568">
    <property type="protein sequence ID" value="CAS11433.1"/>
    <property type="molecule type" value="Genomic_DNA"/>
</dbReference>
<dbReference type="RefSeq" id="WP_000091955.1">
    <property type="nucleotide sequence ID" value="NC_011601.1"/>
</dbReference>
<dbReference type="SMR" id="B7ULJ2"/>
<dbReference type="GeneID" id="93778350"/>
<dbReference type="KEGG" id="ecg:E2348C_3885"/>
<dbReference type="HOGENOM" id="CLU_064548_3_1_6"/>
<dbReference type="Proteomes" id="UP000008205">
    <property type="component" value="Chromosome"/>
</dbReference>
<dbReference type="GO" id="GO:0022625">
    <property type="term" value="C:cytosolic large ribosomal subunit"/>
    <property type="evidence" value="ECO:0007669"/>
    <property type="project" value="TreeGrafter"/>
</dbReference>
<dbReference type="GO" id="GO:0003735">
    <property type="term" value="F:structural constituent of ribosome"/>
    <property type="evidence" value="ECO:0007669"/>
    <property type="project" value="InterPro"/>
</dbReference>
<dbReference type="GO" id="GO:0006412">
    <property type="term" value="P:translation"/>
    <property type="evidence" value="ECO:0007669"/>
    <property type="project" value="UniProtKB-UniRule"/>
</dbReference>
<dbReference type="FunFam" id="2.30.170.40:FF:000001">
    <property type="entry name" value="50S ribosomal protein L28"/>
    <property type="match status" value="1"/>
</dbReference>
<dbReference type="Gene3D" id="2.30.170.40">
    <property type="entry name" value="Ribosomal protein L28/L24"/>
    <property type="match status" value="1"/>
</dbReference>
<dbReference type="HAMAP" id="MF_00373">
    <property type="entry name" value="Ribosomal_bL28"/>
    <property type="match status" value="1"/>
</dbReference>
<dbReference type="InterPro" id="IPR026569">
    <property type="entry name" value="Ribosomal_bL28"/>
</dbReference>
<dbReference type="InterPro" id="IPR034704">
    <property type="entry name" value="Ribosomal_bL28/bL31-like_sf"/>
</dbReference>
<dbReference type="InterPro" id="IPR001383">
    <property type="entry name" value="Ribosomal_bL28_bact-type"/>
</dbReference>
<dbReference type="InterPro" id="IPR037147">
    <property type="entry name" value="Ribosomal_bL28_sf"/>
</dbReference>
<dbReference type="NCBIfam" id="TIGR00009">
    <property type="entry name" value="L28"/>
    <property type="match status" value="1"/>
</dbReference>
<dbReference type="PANTHER" id="PTHR13528">
    <property type="entry name" value="39S RIBOSOMAL PROTEIN L28, MITOCHONDRIAL"/>
    <property type="match status" value="1"/>
</dbReference>
<dbReference type="PANTHER" id="PTHR13528:SF2">
    <property type="entry name" value="LARGE RIBOSOMAL SUBUNIT PROTEIN BL28M"/>
    <property type="match status" value="1"/>
</dbReference>
<dbReference type="Pfam" id="PF00830">
    <property type="entry name" value="Ribosomal_L28"/>
    <property type="match status" value="1"/>
</dbReference>
<dbReference type="SUPFAM" id="SSF143800">
    <property type="entry name" value="L28p-like"/>
    <property type="match status" value="1"/>
</dbReference>
<organism>
    <name type="scientific">Escherichia coli O127:H6 (strain E2348/69 / EPEC)</name>
    <dbReference type="NCBI Taxonomy" id="574521"/>
    <lineage>
        <taxon>Bacteria</taxon>
        <taxon>Pseudomonadati</taxon>
        <taxon>Pseudomonadota</taxon>
        <taxon>Gammaproteobacteria</taxon>
        <taxon>Enterobacterales</taxon>
        <taxon>Enterobacteriaceae</taxon>
        <taxon>Escherichia</taxon>
    </lineage>
</organism>
<sequence>MSRVCQVTGKRPVTGNNRSHALNATKRRFLPNLHSHRFWVESEKRFVTLRVSAKGMRVIDKKGIDTVLAELRARGEKY</sequence>